<comment type="function">
    <text evidence="1">This is one of the proteins that binds to the 5S RNA in the ribosome where it forms part of the central protuberance.</text>
</comment>
<comment type="subunit">
    <text evidence="1">Part of the 50S ribosomal subunit; part of the 5S rRNA/L5/L18/L25 subcomplex. Contacts the 5S rRNA. Binds to the 5S rRNA independently of L5 and L18.</text>
</comment>
<comment type="similarity">
    <text evidence="1">Belongs to the bacterial ribosomal protein bL25 family. CTC subfamily.</text>
</comment>
<organism>
    <name type="scientific">Rhodopirellula baltica (strain DSM 10527 / NCIMB 13988 / SH1)</name>
    <dbReference type="NCBI Taxonomy" id="243090"/>
    <lineage>
        <taxon>Bacteria</taxon>
        <taxon>Pseudomonadati</taxon>
        <taxon>Planctomycetota</taxon>
        <taxon>Planctomycetia</taxon>
        <taxon>Pirellulales</taxon>
        <taxon>Pirellulaceae</taxon>
        <taxon>Rhodopirellula</taxon>
    </lineage>
</organism>
<protein>
    <recommendedName>
        <fullName evidence="1">Large ribosomal subunit protein bL25</fullName>
    </recommendedName>
    <alternativeName>
        <fullName evidence="3">50S ribosomal protein L25</fullName>
    </alternativeName>
    <alternativeName>
        <fullName evidence="1">General stress protein CTC</fullName>
    </alternativeName>
</protein>
<keyword id="KW-1185">Reference proteome</keyword>
<keyword id="KW-0687">Ribonucleoprotein</keyword>
<keyword id="KW-0689">Ribosomal protein</keyword>
<keyword id="KW-0694">RNA-binding</keyword>
<keyword id="KW-0699">rRNA-binding</keyword>
<feature type="chain" id="PRO_0000181586" description="Large ribosomal subunit protein bL25">
    <location>
        <begin position="1"/>
        <end position="212"/>
    </location>
</feature>
<feature type="region of interest" description="Disordered" evidence="2">
    <location>
        <begin position="190"/>
        <end position="212"/>
    </location>
</feature>
<accession>Q7UKU9</accession>
<gene>
    <name evidence="1" type="primary">rplY</name>
    <name evidence="1" type="synonym">ctc</name>
    <name type="ordered locus">RB9923</name>
</gene>
<dbReference type="EMBL" id="BX294150">
    <property type="protein sequence ID" value="CAD76533.1"/>
    <property type="molecule type" value="Genomic_DNA"/>
</dbReference>
<dbReference type="RefSeq" id="NP_869147.1">
    <property type="nucleotide sequence ID" value="NC_005027.1"/>
</dbReference>
<dbReference type="SMR" id="Q7UKU9"/>
<dbReference type="STRING" id="243090.RB9923"/>
<dbReference type="EnsemblBacteria" id="CAD76533">
    <property type="protein sequence ID" value="CAD76533"/>
    <property type="gene ID" value="RB9923"/>
</dbReference>
<dbReference type="KEGG" id="rba:RB9923"/>
<dbReference type="PATRIC" id="fig|243090.15.peg.4777"/>
<dbReference type="eggNOG" id="COG1825">
    <property type="taxonomic scope" value="Bacteria"/>
</dbReference>
<dbReference type="HOGENOM" id="CLU_075939_0_1_0"/>
<dbReference type="InParanoid" id="Q7UKU9"/>
<dbReference type="OrthoDB" id="9790002at2"/>
<dbReference type="Proteomes" id="UP000001025">
    <property type="component" value="Chromosome"/>
</dbReference>
<dbReference type="GO" id="GO:0022625">
    <property type="term" value="C:cytosolic large ribosomal subunit"/>
    <property type="evidence" value="ECO:0000318"/>
    <property type="project" value="GO_Central"/>
</dbReference>
<dbReference type="GO" id="GO:0008097">
    <property type="term" value="F:5S rRNA binding"/>
    <property type="evidence" value="ECO:0000318"/>
    <property type="project" value="GO_Central"/>
</dbReference>
<dbReference type="GO" id="GO:0003735">
    <property type="term" value="F:structural constituent of ribosome"/>
    <property type="evidence" value="ECO:0007669"/>
    <property type="project" value="InterPro"/>
</dbReference>
<dbReference type="GO" id="GO:0006412">
    <property type="term" value="P:translation"/>
    <property type="evidence" value="ECO:0000318"/>
    <property type="project" value="GO_Central"/>
</dbReference>
<dbReference type="CDD" id="cd00495">
    <property type="entry name" value="Ribosomal_L25_TL5_CTC"/>
    <property type="match status" value="1"/>
</dbReference>
<dbReference type="Gene3D" id="2.170.120.20">
    <property type="entry name" value="Ribosomal protein L25, beta domain"/>
    <property type="match status" value="1"/>
</dbReference>
<dbReference type="Gene3D" id="2.40.240.10">
    <property type="entry name" value="Ribosomal Protein L25, Chain P"/>
    <property type="match status" value="1"/>
</dbReference>
<dbReference type="HAMAP" id="MF_01334">
    <property type="entry name" value="Ribosomal_bL25_CTC"/>
    <property type="match status" value="1"/>
</dbReference>
<dbReference type="InterPro" id="IPR020056">
    <property type="entry name" value="Rbsml_bL25/Gln-tRNA_synth_N"/>
</dbReference>
<dbReference type="InterPro" id="IPR011035">
    <property type="entry name" value="Ribosomal_bL25/Gln-tRNA_synth"/>
</dbReference>
<dbReference type="InterPro" id="IPR020057">
    <property type="entry name" value="Ribosomal_bL25_b-dom"/>
</dbReference>
<dbReference type="InterPro" id="IPR037121">
    <property type="entry name" value="Ribosomal_bL25_C"/>
</dbReference>
<dbReference type="InterPro" id="IPR001021">
    <property type="entry name" value="Ribosomal_bL25_long"/>
</dbReference>
<dbReference type="InterPro" id="IPR029751">
    <property type="entry name" value="Ribosomal_L25_dom"/>
</dbReference>
<dbReference type="InterPro" id="IPR020930">
    <property type="entry name" value="Ribosomal_uL5_bac-type"/>
</dbReference>
<dbReference type="NCBIfam" id="TIGR00731">
    <property type="entry name" value="bL25_bact_ctc"/>
    <property type="match status" value="1"/>
</dbReference>
<dbReference type="PANTHER" id="PTHR33284">
    <property type="entry name" value="RIBOSOMAL PROTEIN L25/GLN-TRNA SYNTHETASE, ANTI-CODON-BINDING DOMAIN-CONTAINING PROTEIN"/>
    <property type="match status" value="1"/>
</dbReference>
<dbReference type="PANTHER" id="PTHR33284:SF1">
    <property type="entry name" value="RIBOSOMAL PROTEIN L25_GLN-TRNA SYNTHETASE, ANTI-CODON-BINDING DOMAIN-CONTAINING PROTEIN"/>
    <property type="match status" value="1"/>
</dbReference>
<dbReference type="Pfam" id="PF01386">
    <property type="entry name" value="Ribosomal_L25p"/>
    <property type="match status" value="1"/>
</dbReference>
<dbReference type="Pfam" id="PF14693">
    <property type="entry name" value="Ribosomal_TL5_C"/>
    <property type="match status" value="1"/>
</dbReference>
<dbReference type="SUPFAM" id="SSF50715">
    <property type="entry name" value="Ribosomal protein L25-like"/>
    <property type="match status" value="1"/>
</dbReference>
<sequence length="212" mass="22752">MPRSVPVMTDVIQVTKRESTGTAATRRLRRDGHVPAVLYGHGEANEHLAVPSAQVKGLLRHHSKTVQLSGDVDETALVSDMQWDPLGIEVLHMDLIRVNLKEKVELGVPIVLHGEAVGVREGGMLLENVHEVEIRCSAGSIPDNLVLEVSELGVGEHKTAGDLTLPEGVELITDVDVVIAHIEAQRDEEIAEAGDALAEPEVISKGSGEADE</sequence>
<evidence type="ECO:0000255" key="1">
    <source>
        <dbReference type="HAMAP-Rule" id="MF_01334"/>
    </source>
</evidence>
<evidence type="ECO:0000256" key="2">
    <source>
        <dbReference type="SAM" id="MobiDB-lite"/>
    </source>
</evidence>
<evidence type="ECO:0000305" key="3"/>
<reference key="1">
    <citation type="journal article" date="2003" name="Proc. Natl. Acad. Sci. U.S.A.">
        <title>Complete genome sequence of the marine planctomycete Pirellula sp. strain 1.</title>
        <authorList>
            <person name="Gloeckner F.O."/>
            <person name="Kube M."/>
            <person name="Bauer M."/>
            <person name="Teeling H."/>
            <person name="Lombardot T."/>
            <person name="Ludwig W."/>
            <person name="Gade D."/>
            <person name="Beck A."/>
            <person name="Borzym K."/>
            <person name="Heitmann K."/>
            <person name="Rabus R."/>
            <person name="Schlesner H."/>
            <person name="Amann R."/>
            <person name="Reinhardt R."/>
        </authorList>
    </citation>
    <scope>NUCLEOTIDE SEQUENCE [LARGE SCALE GENOMIC DNA]</scope>
    <source>
        <strain>DSM 10527 / NCIMB 13988 / SH1</strain>
    </source>
</reference>
<name>RL25_RHOBA</name>
<proteinExistence type="inferred from homology"/>